<comment type="function">
    <text evidence="2">Antibacterial peptide with wide spectrum of activity. Active against the Gram-positive bacteria B.cereus (MIC=50 ug/ml), E.faecalis (MIC=25 ug/ml), L.lactis (MIC=1.5 ug/ml), L.innocua (MIC=25 ug/ml), S.aureus (MIC=3 ug/ml), S.epidermidis (MIC=12 ug/ml) and S.uberis (MIC=12 ug/ml), and against the Gram-negative bacteria E.coli (MIC=100 ug/ml) and P.multocida (MIC=25 ug/ml).</text>
</comment>
<comment type="subcellular location">
    <subcellularLocation>
        <location evidence="2">Secreted</location>
    </subcellularLocation>
</comment>
<comment type="tissue specificity">
    <text evidence="2">Expressed by the skin dorsal glands.</text>
</comment>
<comment type="mass spectrometry" mass="2581.0" method="Electrospray" evidence="2"/>
<comment type="similarity">
    <text evidence="1">Belongs to the frog skin active peptide (FSAP) family. Caerin subfamily.</text>
</comment>
<dbReference type="SMR" id="P86484"/>
<dbReference type="GO" id="GO:0005576">
    <property type="term" value="C:extracellular region"/>
    <property type="evidence" value="ECO:0000314"/>
    <property type="project" value="UniProtKB"/>
</dbReference>
<dbReference type="GO" id="GO:0050829">
    <property type="term" value="P:defense response to Gram-negative bacterium"/>
    <property type="evidence" value="ECO:0000314"/>
    <property type="project" value="UniProtKB"/>
</dbReference>
<dbReference type="GO" id="GO:0050830">
    <property type="term" value="P:defense response to Gram-positive bacterium"/>
    <property type="evidence" value="ECO:0000314"/>
    <property type="project" value="UniProtKB"/>
</dbReference>
<dbReference type="InterPro" id="IPR010000">
    <property type="entry name" value="Caerin_1"/>
</dbReference>
<dbReference type="Pfam" id="PF07440">
    <property type="entry name" value="Caerin_1"/>
    <property type="match status" value="1"/>
</dbReference>
<proteinExistence type="evidence at protein level"/>
<reference evidence="4" key="1">
    <citation type="journal article" date="2009" name="Rapid Commun. Mass Spectrom.">
        <title>The host-defence skin peptide profiles of Peron's Tree Frog Litoria peronii in winter and summer. Sequence determination by electrospray mass spectrometry and activities of the peptides.</title>
        <authorList>
            <person name="Bilusich D."/>
            <person name="Jackway R.J."/>
            <person name="Musgrave I.F."/>
            <person name="Tyler M.J."/>
            <person name="Bowie J.H."/>
        </authorList>
    </citation>
    <scope>PROTEIN SEQUENCE</scope>
    <scope>FUNCTION</scope>
    <scope>SUBCELLULAR LOCATION</scope>
    <scope>TISSUE SPECIFICITY</scope>
    <scope>MASS SPECTROMETRY</scope>
    <scope>AMIDATION AT LEU-25</scope>
    <source>
        <tissue evidence="2">Skin secretion</tissue>
    </source>
</reference>
<feature type="peptide" id="PRO_0000394177" description="Caerin 1.1" evidence="2">
    <location>
        <begin position="1"/>
        <end position="25"/>
    </location>
</feature>
<feature type="modified residue" description="Leucine amide" evidence="2">
    <location>
        <position position="25"/>
    </location>
</feature>
<organism>
    <name type="scientific">Litoria peronii</name>
    <name type="common">Emerald spotted tree frog</name>
    <name type="synonym">Hyla peronii</name>
    <dbReference type="NCBI Taxonomy" id="317363"/>
    <lineage>
        <taxon>Eukaryota</taxon>
        <taxon>Metazoa</taxon>
        <taxon>Chordata</taxon>
        <taxon>Craniata</taxon>
        <taxon>Vertebrata</taxon>
        <taxon>Euteleostomi</taxon>
        <taxon>Amphibia</taxon>
        <taxon>Batrachia</taxon>
        <taxon>Anura</taxon>
        <taxon>Neobatrachia</taxon>
        <taxon>Hyloidea</taxon>
        <taxon>Hylidae</taxon>
        <taxon>Pelodryadinae</taxon>
        <taxon>Litoria</taxon>
    </lineage>
</organism>
<keyword id="KW-0027">Amidation</keyword>
<keyword id="KW-0878">Amphibian defense peptide</keyword>
<keyword id="KW-0044">Antibiotic</keyword>
<keyword id="KW-0929">Antimicrobial</keyword>
<keyword id="KW-0903">Direct protein sequencing</keyword>
<keyword id="KW-0964">Secreted</keyword>
<accession>P86484</accession>
<protein>
    <recommendedName>
        <fullName evidence="3">Caerin 1.1</fullName>
    </recommendedName>
</protein>
<name>CR11_LITPE</name>
<evidence type="ECO:0000255" key="1"/>
<evidence type="ECO:0000269" key="2">
    <source>
    </source>
</evidence>
<evidence type="ECO:0000303" key="3">
    <source>
    </source>
</evidence>
<evidence type="ECO:0000305" key="4"/>
<sequence length="25" mass="2585">GLLSVLGSVAKHVLPHVVPVIAEHL</sequence>